<feature type="chain" id="PRO_0000089554" description="Cilia- and flagella-associated protein 206">
    <location>
        <begin position="1"/>
        <end position="622"/>
    </location>
</feature>
<feature type="region of interest" description="Disordered" evidence="3">
    <location>
        <begin position="571"/>
        <end position="592"/>
    </location>
</feature>
<feature type="sequence conflict" description="In Ref. 1; BAC41245." evidence="4" ref="1">
    <original>L</original>
    <variation>P</variation>
    <location>
        <position position="326"/>
    </location>
</feature>
<gene>
    <name evidence="2" type="primary">CFAP206</name>
    <name type="ORF">QtsA-12767</name>
    <name type="ORF">QtsA-18510</name>
</gene>
<evidence type="ECO:0000250" key="1">
    <source>
        <dbReference type="UniProtKB" id="Q6PE87"/>
    </source>
</evidence>
<evidence type="ECO:0000250" key="2">
    <source>
        <dbReference type="UniProtKB" id="Q8IYR0"/>
    </source>
</evidence>
<evidence type="ECO:0000256" key="3">
    <source>
        <dbReference type="SAM" id="MobiDB-lite"/>
    </source>
</evidence>
<evidence type="ECO:0000305" key="4"/>
<keyword id="KW-0966">Cell projection</keyword>
<keyword id="KW-0969">Cilium</keyword>
<keyword id="KW-0970">Cilium biogenesis/degradation</keyword>
<keyword id="KW-0963">Cytoplasm</keyword>
<keyword id="KW-0206">Cytoskeleton</keyword>
<keyword id="KW-1185">Reference proteome</keyword>
<dbReference type="EMBL" id="AB070085">
    <property type="protein sequence ID" value="BAB63030.1"/>
    <property type="molecule type" value="mRNA"/>
</dbReference>
<dbReference type="EMBL" id="AB096998">
    <property type="protein sequence ID" value="BAC41245.1"/>
    <property type="molecule type" value="mRNA"/>
</dbReference>
<dbReference type="RefSeq" id="NP_001271486.1">
    <property type="nucleotide sequence ID" value="NM_001284557.1"/>
</dbReference>
<dbReference type="RefSeq" id="XP_015304320.1">
    <property type="nucleotide sequence ID" value="XM_015448834.1"/>
</dbReference>
<dbReference type="RefSeq" id="XP_015304321.1">
    <property type="nucleotide sequence ID" value="XM_015448835.1"/>
</dbReference>
<dbReference type="RefSeq" id="XP_045247149.1">
    <property type="nucleotide sequence ID" value="XM_045391214.2"/>
</dbReference>
<dbReference type="STRING" id="9541.ENSMFAP00000021974"/>
<dbReference type="GeneID" id="102133782"/>
<dbReference type="VEuPathDB" id="HostDB:ENSMFAG00000035889"/>
<dbReference type="eggNOG" id="ENOG502QTGJ">
    <property type="taxonomic scope" value="Eukaryota"/>
</dbReference>
<dbReference type="OMA" id="QLMELMC"/>
<dbReference type="Proteomes" id="UP000233100">
    <property type="component" value="Chromosome 4"/>
</dbReference>
<dbReference type="GO" id="GO:0005930">
    <property type="term" value="C:axoneme"/>
    <property type="evidence" value="ECO:0000250"/>
    <property type="project" value="UniProtKB"/>
</dbReference>
<dbReference type="GO" id="GO:0036064">
    <property type="term" value="C:ciliary basal body"/>
    <property type="evidence" value="ECO:0000250"/>
    <property type="project" value="UniProtKB"/>
</dbReference>
<dbReference type="GO" id="GO:0031514">
    <property type="term" value="C:motile cilium"/>
    <property type="evidence" value="ECO:0000250"/>
    <property type="project" value="UniProtKB"/>
</dbReference>
<dbReference type="GO" id="GO:0001534">
    <property type="term" value="C:radial spoke"/>
    <property type="evidence" value="ECO:0000250"/>
    <property type="project" value="UniProtKB"/>
</dbReference>
<dbReference type="GO" id="GO:0035082">
    <property type="term" value="P:axoneme assembly"/>
    <property type="evidence" value="ECO:0000250"/>
    <property type="project" value="UniProtKB"/>
</dbReference>
<dbReference type="GO" id="GO:0003341">
    <property type="term" value="P:cilium movement"/>
    <property type="evidence" value="ECO:0000250"/>
    <property type="project" value="UniProtKB"/>
</dbReference>
<dbReference type="GO" id="GO:0003356">
    <property type="term" value="P:regulation of cilium beat frequency"/>
    <property type="evidence" value="ECO:0000250"/>
    <property type="project" value="UniProtKB"/>
</dbReference>
<dbReference type="GO" id="GO:1901317">
    <property type="term" value="P:regulation of flagellated sperm motility"/>
    <property type="evidence" value="ECO:0000250"/>
    <property type="project" value="UniProtKB"/>
</dbReference>
<dbReference type="GO" id="GO:0007288">
    <property type="term" value="P:sperm axoneme assembly"/>
    <property type="evidence" value="ECO:0000250"/>
    <property type="project" value="UniProtKB"/>
</dbReference>
<dbReference type="InterPro" id="IPR021897">
    <property type="entry name" value="FAP206"/>
</dbReference>
<dbReference type="PANTHER" id="PTHR21442">
    <property type="entry name" value="CILIA- AND FLAGELLA-ASSOCIATED PROTEIN 206"/>
    <property type="match status" value="1"/>
</dbReference>
<dbReference type="PANTHER" id="PTHR21442:SF0">
    <property type="entry name" value="CILIA- AND FLAGELLA-ASSOCIATED PROTEIN 206"/>
    <property type="match status" value="1"/>
</dbReference>
<dbReference type="Pfam" id="PF12018">
    <property type="entry name" value="FAP206"/>
    <property type="match status" value="1"/>
</dbReference>
<protein>
    <recommendedName>
        <fullName evidence="4">Cilia- and flagella-associated protein 206</fullName>
    </recommendedName>
</protein>
<sequence length="622" mass="71148">MPPTQAESVIRSIIREIGQECAAHGEIVSETLIAFMVKAVVLDPSNGFNMDRTLMKSDVQNLVKLCMTRLLDTKNPSLDTIKMQVYFDMNYTNRVEFLEEHHRVLESRLGSVTREITDNRACAKEELESLYRKIISYVLLRSGLGSPTDIKTVREVTAALQSIFPQAELGTFLTLSKKDKERQLKELTMIVTGIRLFNRDCGKGGEGIDDLPAVLHVAIPATMQHIDYQLETARSQVYRYTAILEKAANDPHMRAELQPYMLKEALYNIRQYEVFLQIILSDIITGAQEVEMMTKQLGAHLEQLKMTIKSKTAVPTSQVFPIFIALSTLWTSLQDETIVVGVLSNLFTHIQPFLGAHELYFPERAMQRHLNGATVKTDVCRMKEHMEDRVNVADFRKLEWLFPETTANFDKLLIQYRGFCAYTFAATDGLLLPGNPAIGILKYKEKYYTFNSKDAAYSFAENPEHYIDIVREKAKKNTELIQLLELHQQFETLIPYSQMRDADKHYIKPITKCESSTQTDTHILPPTIVRSYEWNEWELRRKAIKLANLHQKVTHSVQTDLSHLRRENCSQVYPPKDTSTQSMREDSTGVPRPQIYLAGLRGGKSEITDEVKVNLTRAVDET</sequence>
<name>CF206_MACFA</name>
<proteinExistence type="evidence at transcript level"/>
<reference key="1">
    <citation type="journal article" date="2002" name="BMC Genomics">
        <title>Cynomolgus monkey testicular cDNAs for discovery of novel human genes in the human genome sequence.</title>
        <authorList>
            <person name="Osada N."/>
            <person name="Hida M."/>
            <person name="Kusuda J."/>
            <person name="Tanuma R."/>
            <person name="Hirata M."/>
            <person name="Suto Y."/>
            <person name="Hirai M."/>
            <person name="Terao K."/>
            <person name="Sugano S."/>
            <person name="Hashimoto K."/>
        </authorList>
    </citation>
    <scope>NUCLEOTIDE SEQUENCE [LARGE SCALE MRNA]</scope>
    <source>
        <tissue>Testis</tissue>
    </source>
</reference>
<organism>
    <name type="scientific">Macaca fascicularis</name>
    <name type="common">Crab-eating macaque</name>
    <name type="synonym">Cynomolgus monkey</name>
    <dbReference type="NCBI Taxonomy" id="9541"/>
    <lineage>
        <taxon>Eukaryota</taxon>
        <taxon>Metazoa</taxon>
        <taxon>Chordata</taxon>
        <taxon>Craniata</taxon>
        <taxon>Vertebrata</taxon>
        <taxon>Euteleostomi</taxon>
        <taxon>Mammalia</taxon>
        <taxon>Eutheria</taxon>
        <taxon>Euarchontoglires</taxon>
        <taxon>Primates</taxon>
        <taxon>Haplorrhini</taxon>
        <taxon>Catarrhini</taxon>
        <taxon>Cercopithecidae</taxon>
        <taxon>Cercopithecinae</taxon>
        <taxon>Macaca</taxon>
    </lineage>
</organism>
<accession>Q95JU3</accession>
<accession>Q8HZY4</accession>
<comment type="function">
    <text evidence="1">Essential for sperm motility and is involved in the regulation of the beating frequency of motile cilia on the epithelial cells of the respiratory tract (By similarity). Required for the establishment of radial spokes in sperm flagella (By similarity).</text>
</comment>
<comment type="subcellular location">
    <subcellularLocation>
        <location evidence="1">Cytoplasm</location>
        <location evidence="1">Cytoskeleton</location>
        <location evidence="1">Cilium axoneme</location>
    </subcellularLocation>
    <subcellularLocation>
        <location evidence="1">Cytoplasm</location>
        <location evidence="1">Cytoskeleton</location>
        <location evidence="1">Cilium basal body</location>
    </subcellularLocation>
</comment>
<comment type="similarity">
    <text evidence="4">Belongs to the CFAP206 family.</text>
</comment>